<accession>Q6FQU5</accession>
<proteinExistence type="inferred from homology"/>
<feature type="chain" id="PRO_0000232187" description="ATP-dependent RNA helicase DHH1">
    <location>
        <begin position="1"/>
        <end position="507"/>
    </location>
</feature>
<feature type="domain" description="Helicase ATP-binding" evidence="2">
    <location>
        <begin position="62"/>
        <end position="232"/>
    </location>
</feature>
<feature type="domain" description="Helicase C-terminal" evidence="3">
    <location>
        <begin position="242"/>
        <end position="402"/>
    </location>
</feature>
<feature type="region of interest" description="Disordered" evidence="4">
    <location>
        <begin position="1"/>
        <end position="26"/>
    </location>
</feature>
<feature type="region of interest" description="Disordered" evidence="4">
    <location>
        <begin position="425"/>
        <end position="507"/>
    </location>
</feature>
<feature type="short sequence motif" description="Q motif">
    <location>
        <begin position="31"/>
        <end position="59"/>
    </location>
</feature>
<feature type="short sequence motif" description="DEAD box">
    <location>
        <begin position="180"/>
        <end position="183"/>
    </location>
</feature>
<feature type="compositionally biased region" description="Low complexity" evidence="4">
    <location>
        <begin position="430"/>
        <end position="452"/>
    </location>
</feature>
<feature type="compositionally biased region" description="Low complexity" evidence="4">
    <location>
        <begin position="466"/>
        <end position="488"/>
    </location>
</feature>
<feature type="binding site" evidence="2">
    <location>
        <begin position="75"/>
        <end position="82"/>
    </location>
    <ligand>
        <name>ATP</name>
        <dbReference type="ChEBI" id="CHEBI:30616"/>
    </ligand>
</feature>
<protein>
    <recommendedName>
        <fullName>ATP-dependent RNA helicase DHH1</fullName>
        <ecNumber>3.6.4.13</ecNumber>
    </recommendedName>
</protein>
<reference key="1">
    <citation type="journal article" date="2004" name="Nature">
        <title>Genome evolution in yeasts.</title>
        <authorList>
            <person name="Dujon B."/>
            <person name="Sherman D."/>
            <person name="Fischer G."/>
            <person name="Durrens P."/>
            <person name="Casaregola S."/>
            <person name="Lafontaine I."/>
            <person name="de Montigny J."/>
            <person name="Marck C."/>
            <person name="Neuveglise C."/>
            <person name="Talla E."/>
            <person name="Goffard N."/>
            <person name="Frangeul L."/>
            <person name="Aigle M."/>
            <person name="Anthouard V."/>
            <person name="Babour A."/>
            <person name="Barbe V."/>
            <person name="Barnay S."/>
            <person name="Blanchin S."/>
            <person name="Beckerich J.-M."/>
            <person name="Beyne E."/>
            <person name="Bleykasten C."/>
            <person name="Boisrame A."/>
            <person name="Boyer J."/>
            <person name="Cattolico L."/>
            <person name="Confanioleri F."/>
            <person name="de Daruvar A."/>
            <person name="Despons L."/>
            <person name="Fabre E."/>
            <person name="Fairhead C."/>
            <person name="Ferry-Dumazet H."/>
            <person name="Groppi A."/>
            <person name="Hantraye F."/>
            <person name="Hennequin C."/>
            <person name="Jauniaux N."/>
            <person name="Joyet P."/>
            <person name="Kachouri R."/>
            <person name="Kerrest A."/>
            <person name="Koszul R."/>
            <person name="Lemaire M."/>
            <person name="Lesur I."/>
            <person name="Ma L."/>
            <person name="Muller H."/>
            <person name="Nicaud J.-M."/>
            <person name="Nikolski M."/>
            <person name="Oztas S."/>
            <person name="Ozier-Kalogeropoulos O."/>
            <person name="Pellenz S."/>
            <person name="Potier S."/>
            <person name="Richard G.-F."/>
            <person name="Straub M.-L."/>
            <person name="Suleau A."/>
            <person name="Swennen D."/>
            <person name="Tekaia F."/>
            <person name="Wesolowski-Louvel M."/>
            <person name="Westhof E."/>
            <person name="Wirth B."/>
            <person name="Zeniou-Meyer M."/>
            <person name="Zivanovic Y."/>
            <person name="Bolotin-Fukuhara M."/>
            <person name="Thierry A."/>
            <person name="Bouchier C."/>
            <person name="Caudron B."/>
            <person name="Scarpelli C."/>
            <person name="Gaillardin C."/>
            <person name="Weissenbach J."/>
            <person name="Wincker P."/>
            <person name="Souciet J.-L."/>
        </authorList>
    </citation>
    <scope>NUCLEOTIDE SEQUENCE [LARGE SCALE GENOMIC DNA]</scope>
    <source>
        <strain>ATCC 2001 / BCRC 20586 / JCM 3761 / NBRC 0622 / NRRL Y-65 / CBS 138</strain>
    </source>
</reference>
<dbReference type="EC" id="3.6.4.13"/>
<dbReference type="EMBL" id="CR380955">
    <property type="protein sequence ID" value="CAG60336.1"/>
    <property type="molecule type" value="Genomic_DNA"/>
</dbReference>
<dbReference type="RefSeq" id="XP_447399.1">
    <property type="nucleotide sequence ID" value="XM_447399.1"/>
</dbReference>
<dbReference type="SMR" id="Q6FQU5"/>
<dbReference type="FunCoup" id="Q6FQU5">
    <property type="interactions" value="1448"/>
</dbReference>
<dbReference type="STRING" id="284593.Q6FQU5"/>
<dbReference type="EnsemblFungi" id="CAGL0I03476g-T">
    <property type="protein sequence ID" value="CAGL0I03476g-T-p1"/>
    <property type="gene ID" value="CAGL0I03476g"/>
</dbReference>
<dbReference type="KEGG" id="cgr:2889178"/>
<dbReference type="CGD" id="CAL0129533">
    <property type="gene designation" value="CAGL0I03476g"/>
</dbReference>
<dbReference type="VEuPathDB" id="FungiDB:CAGL0I03476g"/>
<dbReference type="eggNOG" id="KOG0326">
    <property type="taxonomic scope" value="Eukaryota"/>
</dbReference>
<dbReference type="HOGENOM" id="CLU_003041_30_2_1"/>
<dbReference type="InParanoid" id="Q6FQU5"/>
<dbReference type="OMA" id="TYEDRHT"/>
<dbReference type="Proteomes" id="UP000002428">
    <property type="component" value="Chromosome I"/>
</dbReference>
<dbReference type="GO" id="GO:0098562">
    <property type="term" value="C:cytoplasmic side of membrane"/>
    <property type="evidence" value="ECO:0007669"/>
    <property type="project" value="EnsemblFungi"/>
</dbReference>
<dbReference type="GO" id="GO:0010494">
    <property type="term" value="C:cytoplasmic stress granule"/>
    <property type="evidence" value="ECO:0007669"/>
    <property type="project" value="EnsemblFungi"/>
</dbReference>
<dbReference type="GO" id="GO:0000932">
    <property type="term" value="C:P-body"/>
    <property type="evidence" value="ECO:0007669"/>
    <property type="project" value="UniProtKB-SubCell"/>
</dbReference>
<dbReference type="GO" id="GO:0005524">
    <property type="term" value="F:ATP binding"/>
    <property type="evidence" value="ECO:0007669"/>
    <property type="project" value="UniProtKB-KW"/>
</dbReference>
<dbReference type="GO" id="GO:0016887">
    <property type="term" value="F:ATP hydrolysis activity"/>
    <property type="evidence" value="ECO:0007669"/>
    <property type="project" value="EnsemblFungi"/>
</dbReference>
<dbReference type="GO" id="GO:0003682">
    <property type="term" value="F:chromatin binding"/>
    <property type="evidence" value="ECO:0007669"/>
    <property type="project" value="EnsemblFungi"/>
</dbReference>
<dbReference type="GO" id="GO:0003729">
    <property type="term" value="F:mRNA binding"/>
    <property type="evidence" value="ECO:0007669"/>
    <property type="project" value="EnsemblFungi"/>
</dbReference>
<dbReference type="GO" id="GO:0003724">
    <property type="term" value="F:RNA helicase activity"/>
    <property type="evidence" value="ECO:0007669"/>
    <property type="project" value="UniProtKB-EC"/>
</dbReference>
<dbReference type="GO" id="GO:0042149">
    <property type="term" value="P:cellular response to glucose starvation"/>
    <property type="evidence" value="ECO:0007669"/>
    <property type="project" value="EnsemblFungi"/>
</dbReference>
<dbReference type="GO" id="GO:0006995">
    <property type="term" value="P:cellular response to nitrogen starvation"/>
    <property type="evidence" value="ECO:0007669"/>
    <property type="project" value="EnsemblFungi"/>
</dbReference>
<dbReference type="GO" id="GO:0000290">
    <property type="term" value="P:deadenylation-dependent decapping of nuclear-transcribed mRNA"/>
    <property type="evidence" value="ECO:0007669"/>
    <property type="project" value="EnsemblFungi"/>
</dbReference>
<dbReference type="GO" id="GO:0036267">
    <property type="term" value="P:invasive filamentous growth"/>
    <property type="evidence" value="ECO:0007669"/>
    <property type="project" value="EnsemblFungi"/>
</dbReference>
<dbReference type="GO" id="GO:0006397">
    <property type="term" value="P:mRNA processing"/>
    <property type="evidence" value="ECO:0007669"/>
    <property type="project" value="UniProtKB-KW"/>
</dbReference>
<dbReference type="GO" id="GO:0051028">
    <property type="term" value="P:mRNA transport"/>
    <property type="evidence" value="ECO:0007669"/>
    <property type="project" value="UniProtKB-KW"/>
</dbReference>
<dbReference type="GO" id="GO:0045900">
    <property type="term" value="P:negative regulation of translational elongation"/>
    <property type="evidence" value="ECO:0007669"/>
    <property type="project" value="EnsemblFungi"/>
</dbReference>
<dbReference type="GO" id="GO:0033962">
    <property type="term" value="P:P-body assembly"/>
    <property type="evidence" value="ECO:0007669"/>
    <property type="project" value="EnsemblFungi"/>
</dbReference>
<dbReference type="GO" id="GO:0045727">
    <property type="term" value="P:positive regulation of translation"/>
    <property type="evidence" value="ECO:0007669"/>
    <property type="project" value="EnsemblFungi"/>
</dbReference>
<dbReference type="GO" id="GO:0007124">
    <property type="term" value="P:pseudohyphal growth"/>
    <property type="evidence" value="ECO:0007669"/>
    <property type="project" value="EnsemblFungi"/>
</dbReference>
<dbReference type="GO" id="GO:0010603">
    <property type="term" value="P:regulation of cytoplasmic mRNA processing body assembly"/>
    <property type="evidence" value="ECO:0007669"/>
    <property type="project" value="EnsemblFungi"/>
</dbReference>
<dbReference type="GO" id="GO:0000749">
    <property type="term" value="P:response to pheromone triggering conjugation with cellular fusion"/>
    <property type="evidence" value="ECO:0007669"/>
    <property type="project" value="EnsemblFungi"/>
</dbReference>
<dbReference type="GO" id="GO:0034063">
    <property type="term" value="P:stress granule assembly"/>
    <property type="evidence" value="ECO:0007669"/>
    <property type="project" value="EnsemblFungi"/>
</dbReference>
<dbReference type="CDD" id="cd17940">
    <property type="entry name" value="DEADc_DDX6"/>
    <property type="match status" value="1"/>
</dbReference>
<dbReference type="CDD" id="cd18787">
    <property type="entry name" value="SF2_C_DEAD"/>
    <property type="match status" value="1"/>
</dbReference>
<dbReference type="FunFam" id="3.40.50.300:FF:000114">
    <property type="entry name" value="ATP-dependent RNA helicase DDX6"/>
    <property type="match status" value="1"/>
</dbReference>
<dbReference type="FunFam" id="3.40.50.300:FF:000364">
    <property type="entry name" value="ATP-dependent RNA helicase DDX6"/>
    <property type="match status" value="1"/>
</dbReference>
<dbReference type="Gene3D" id="3.40.50.300">
    <property type="entry name" value="P-loop containing nucleotide triphosphate hydrolases"/>
    <property type="match status" value="2"/>
</dbReference>
<dbReference type="InterPro" id="IPR011545">
    <property type="entry name" value="DEAD/DEAH_box_helicase_dom"/>
</dbReference>
<dbReference type="InterPro" id="IPR014001">
    <property type="entry name" value="Helicase_ATP-bd"/>
</dbReference>
<dbReference type="InterPro" id="IPR001650">
    <property type="entry name" value="Helicase_C-like"/>
</dbReference>
<dbReference type="InterPro" id="IPR027417">
    <property type="entry name" value="P-loop_NTPase"/>
</dbReference>
<dbReference type="InterPro" id="IPR000629">
    <property type="entry name" value="RNA-helicase_DEAD-box_CS"/>
</dbReference>
<dbReference type="InterPro" id="IPR014014">
    <property type="entry name" value="RNA_helicase_DEAD_Q_motif"/>
</dbReference>
<dbReference type="PANTHER" id="PTHR47960">
    <property type="entry name" value="DEAD-BOX ATP-DEPENDENT RNA HELICASE 50"/>
    <property type="match status" value="1"/>
</dbReference>
<dbReference type="Pfam" id="PF00270">
    <property type="entry name" value="DEAD"/>
    <property type="match status" value="1"/>
</dbReference>
<dbReference type="Pfam" id="PF00271">
    <property type="entry name" value="Helicase_C"/>
    <property type="match status" value="1"/>
</dbReference>
<dbReference type="SMART" id="SM00487">
    <property type="entry name" value="DEXDc"/>
    <property type="match status" value="1"/>
</dbReference>
<dbReference type="SMART" id="SM00490">
    <property type="entry name" value="HELICc"/>
    <property type="match status" value="1"/>
</dbReference>
<dbReference type="SUPFAM" id="SSF52540">
    <property type="entry name" value="P-loop containing nucleoside triphosphate hydrolases"/>
    <property type="match status" value="1"/>
</dbReference>
<dbReference type="PROSITE" id="PS00039">
    <property type="entry name" value="DEAD_ATP_HELICASE"/>
    <property type="match status" value="1"/>
</dbReference>
<dbReference type="PROSITE" id="PS51192">
    <property type="entry name" value="HELICASE_ATP_BIND_1"/>
    <property type="match status" value="1"/>
</dbReference>
<dbReference type="PROSITE" id="PS51194">
    <property type="entry name" value="HELICASE_CTER"/>
    <property type="match status" value="1"/>
</dbReference>
<dbReference type="PROSITE" id="PS51195">
    <property type="entry name" value="Q_MOTIF"/>
    <property type="match status" value="1"/>
</dbReference>
<evidence type="ECO:0000250" key="1"/>
<evidence type="ECO:0000255" key="2">
    <source>
        <dbReference type="PROSITE-ProRule" id="PRU00541"/>
    </source>
</evidence>
<evidence type="ECO:0000255" key="3">
    <source>
        <dbReference type="PROSITE-ProRule" id="PRU00542"/>
    </source>
</evidence>
<evidence type="ECO:0000256" key="4">
    <source>
        <dbReference type="SAM" id="MobiDB-lite"/>
    </source>
</evidence>
<evidence type="ECO:0000305" key="5"/>
<organism>
    <name type="scientific">Candida glabrata (strain ATCC 2001 / BCRC 20586 / JCM 3761 / NBRC 0622 / NRRL Y-65 / CBS 138)</name>
    <name type="common">Yeast</name>
    <name type="synonym">Nakaseomyces glabratus</name>
    <dbReference type="NCBI Taxonomy" id="284593"/>
    <lineage>
        <taxon>Eukaryota</taxon>
        <taxon>Fungi</taxon>
        <taxon>Dikarya</taxon>
        <taxon>Ascomycota</taxon>
        <taxon>Saccharomycotina</taxon>
        <taxon>Saccharomycetes</taxon>
        <taxon>Saccharomycetales</taxon>
        <taxon>Saccharomycetaceae</taxon>
        <taxon>Nakaseomyces</taxon>
    </lineage>
</organism>
<gene>
    <name type="primary">DHH1</name>
    <name type="ordered locus">CAGL0I03476g</name>
</gene>
<sequence length="507" mass="57695">MSEDNSWKTQLNLPKKDTRPQTDDVLNTKGNSFEDFYLKRELLMGIFEAGFEKPSPIQEEAIPVAITGRDILARAKNGTGKTAAFVIPTLEKIKPKLNKIQALIMVPTRELALQTSQVIRTLGRHCGVSCMVTTGGTNLRDDILRLNETVHVLVGTPGRVLDLASRKVADLSECSLFVMDEADKMLSRDFKTIIEQVLTFLPKAHQSLLFSATFPLTVKEFMVKHLHKPYEINLMEELTLKGITQYYAFVEERQKLHCLNTLFSKLQINQAIIFCNSTNRVELLAKKITDLGYSCYYSHARMKQQDRNKVFHDFRQGKVRTLVCSDLLTRGIDIQAVNVVINFDFPKTAETYLHRIGRSGRFGHLGLAINLINWNDRFNLYKIEQELGTEIAAIPATIDKSLYVAEDDTAVPVPVPIEDPHIVHQRRMQEQQQQQQQQQGQQGQQQGYPGQQAFIPPQQGQPQFMPVPQQYMQMNQQQGMPPNQQQPPAMGYPPQQLPTGYVAQQRY</sequence>
<keyword id="KW-0067">ATP-binding</keyword>
<keyword id="KW-0963">Cytoplasm</keyword>
<keyword id="KW-0347">Helicase</keyword>
<keyword id="KW-0378">Hydrolase</keyword>
<keyword id="KW-0507">mRNA processing</keyword>
<keyword id="KW-0509">mRNA transport</keyword>
<keyword id="KW-0547">Nucleotide-binding</keyword>
<keyword id="KW-1185">Reference proteome</keyword>
<keyword id="KW-0694">RNA-binding</keyword>
<keyword id="KW-0810">Translation regulation</keyword>
<keyword id="KW-0813">Transport</keyword>
<comment type="function">
    <text evidence="1">ATP-dependent RNA helicase involved in mRNA turnover, and more specifically in mRNA decapping. Is involved in G1/S DNA-damage checkpoint recovery, probably through the regulation of the translational status of a subset of mRNAs. May also have a role in translation and mRNA nuclear export (By similarity).</text>
</comment>
<comment type="catalytic activity">
    <reaction>
        <text>ATP + H2O = ADP + phosphate + H(+)</text>
        <dbReference type="Rhea" id="RHEA:13065"/>
        <dbReference type="ChEBI" id="CHEBI:15377"/>
        <dbReference type="ChEBI" id="CHEBI:15378"/>
        <dbReference type="ChEBI" id="CHEBI:30616"/>
        <dbReference type="ChEBI" id="CHEBI:43474"/>
        <dbReference type="ChEBI" id="CHEBI:456216"/>
        <dbReference type="EC" id="3.6.4.13"/>
    </reaction>
</comment>
<comment type="subcellular location">
    <subcellularLocation>
        <location evidence="1">Cytoplasm</location>
        <location evidence="1">P-body</location>
    </subcellularLocation>
    <text evidence="1">Is concentrated in several cytoplasmic foci called P bodies (or cytoplasmic processing bodies) which represent sites of mRNA decapping and 5' to 3' exonucleotidic decay.</text>
</comment>
<comment type="domain">
    <text>The Q motif is unique to and characteristic of the DEAD box family of RNA helicases and controls ATP binding and hydrolysis.</text>
</comment>
<comment type="similarity">
    <text evidence="5">Belongs to the DEAD box helicase family. DDX6/DHH1 subfamily.</text>
</comment>
<name>DHH1_CANGA</name>